<organism>
    <name type="scientific">Shigella flexneri serotype 5b (strain 8401)</name>
    <dbReference type="NCBI Taxonomy" id="373384"/>
    <lineage>
        <taxon>Bacteria</taxon>
        <taxon>Pseudomonadati</taxon>
        <taxon>Pseudomonadota</taxon>
        <taxon>Gammaproteobacteria</taxon>
        <taxon>Enterobacterales</taxon>
        <taxon>Enterobacteriaceae</taxon>
        <taxon>Shigella</taxon>
    </lineage>
</organism>
<sequence>MFAGLPSLTHEQQQKAVERIQELMAQGMSSGQAIALVAEELRANHSGELIVARFEDEDE</sequence>
<proteinExistence type="inferred from homology"/>
<feature type="chain" id="PRO_1000014972" description="UPF0181 protein YoaH">
    <location>
        <begin position="1"/>
        <end position="59"/>
    </location>
</feature>
<reference key="1">
    <citation type="journal article" date="2006" name="BMC Genomics">
        <title>Complete genome sequence of Shigella flexneri 5b and comparison with Shigella flexneri 2a.</title>
        <authorList>
            <person name="Nie H."/>
            <person name="Yang F."/>
            <person name="Zhang X."/>
            <person name="Yang J."/>
            <person name="Chen L."/>
            <person name="Wang J."/>
            <person name="Xiong Z."/>
            <person name="Peng J."/>
            <person name="Sun L."/>
            <person name="Dong J."/>
            <person name="Xue Y."/>
            <person name="Xu X."/>
            <person name="Chen S."/>
            <person name="Yao Z."/>
            <person name="Shen Y."/>
            <person name="Jin Q."/>
        </authorList>
    </citation>
    <scope>NUCLEOTIDE SEQUENCE [LARGE SCALE GENOMIC DNA]</scope>
    <source>
        <strain>8401</strain>
    </source>
</reference>
<accession>Q0T504</accession>
<name>YOAH_SHIF8</name>
<dbReference type="EMBL" id="CP000266">
    <property type="protein sequence ID" value="ABF03611.1"/>
    <property type="molecule type" value="Genomic_DNA"/>
</dbReference>
<dbReference type="RefSeq" id="WP_000457332.1">
    <property type="nucleotide sequence ID" value="NC_008258.1"/>
</dbReference>
<dbReference type="SMR" id="Q0T504"/>
<dbReference type="KEGG" id="sfv:SFV_1418"/>
<dbReference type="HOGENOM" id="CLU_185263_0_0_6"/>
<dbReference type="Proteomes" id="UP000000659">
    <property type="component" value="Chromosome"/>
</dbReference>
<dbReference type="HAMAP" id="MF_00507">
    <property type="entry name" value="UPF0181"/>
    <property type="match status" value="1"/>
</dbReference>
<dbReference type="InterPro" id="IPR005371">
    <property type="entry name" value="UPF0181"/>
</dbReference>
<dbReference type="NCBIfam" id="NF003476">
    <property type="entry name" value="PRK05114.1"/>
    <property type="match status" value="1"/>
</dbReference>
<dbReference type="Pfam" id="PF03701">
    <property type="entry name" value="UPF0181"/>
    <property type="match status" value="1"/>
</dbReference>
<gene>
    <name evidence="1" type="primary">yoaH</name>
    <name type="ordered locus">SFV_1418</name>
</gene>
<protein>
    <recommendedName>
        <fullName evidence="1">UPF0181 protein YoaH</fullName>
    </recommendedName>
</protein>
<comment type="similarity">
    <text evidence="1">Belongs to the UPF0181 family.</text>
</comment>
<evidence type="ECO:0000255" key="1">
    <source>
        <dbReference type="HAMAP-Rule" id="MF_00507"/>
    </source>
</evidence>